<sequence>MNYLPIFVDLKNRPVLVVGGGHVAVRKIYALLKADALVKVVAEKLHSSLQILVNEGKVEWLAKAFEASQVTSSYLVIAATDDNALNQQVFDTAESQQRLVNVVDDQPRCSYIFPSIIDRSPVQIAISSGGAAPVLIRLLREKLEALIPHNLGAMADIATRWRSAVKTQFPQLTQRRRFWEKLFTHQSFQRLTENHQIEQAEALVESELQNNNPVLGEVSLVGAGPGDAGLLTLKGLQTIQQADVVLYDALVSEAVLELVRRDADKVFVGKRAGKHSVKQDDTNQLLVKYAKQGKRVVRLKGGDPFVFGRGGEELEILKAENIPFSVVPGITAALGATAYAGIPLTHRDHAQTAMFITGHLKPDGNRLKWETLAQGNQTLVVYMGTIKAAELSAELQKHGKPSDTPVAIISNGTLPNQQVQTGVLSELAELAEKAPTPALIVIGEVVKLQKDLAWFGKEAVQFVSTQETLWQKPTLQNKETHWKQAA</sequence>
<keyword id="KW-0169">Cobalamin biosynthesis</keyword>
<keyword id="KW-0456">Lyase</keyword>
<keyword id="KW-0489">Methyltransferase</keyword>
<keyword id="KW-0511">Multifunctional enzyme</keyword>
<keyword id="KW-0520">NAD</keyword>
<keyword id="KW-0560">Oxidoreductase</keyword>
<keyword id="KW-0597">Phosphoprotein</keyword>
<keyword id="KW-0627">Porphyrin biosynthesis</keyword>
<keyword id="KW-0949">S-adenosyl-L-methionine</keyword>
<keyword id="KW-0808">Transferase</keyword>
<gene>
    <name evidence="1" type="primary">cysG</name>
    <name type="ordered locus">APP7_1934</name>
</gene>
<proteinExistence type="inferred from homology"/>
<protein>
    <recommendedName>
        <fullName evidence="1">Siroheme synthase</fullName>
    </recommendedName>
    <domain>
        <recommendedName>
            <fullName evidence="1">Uroporphyrinogen-III C-methyltransferase</fullName>
            <shortName evidence="1">Urogen III methylase</shortName>
            <ecNumber evidence="1">2.1.1.107</ecNumber>
        </recommendedName>
        <alternativeName>
            <fullName evidence="1">SUMT</fullName>
        </alternativeName>
        <alternativeName>
            <fullName evidence="1">Uroporphyrinogen III methylase</fullName>
            <shortName evidence="1">UROM</shortName>
        </alternativeName>
    </domain>
    <domain>
        <recommendedName>
            <fullName evidence="1">Precorrin-2 dehydrogenase</fullName>
            <ecNumber evidence="1">1.3.1.76</ecNumber>
        </recommendedName>
    </domain>
    <domain>
        <recommendedName>
            <fullName evidence="1">Sirohydrochlorin ferrochelatase</fullName>
            <ecNumber evidence="1">4.99.1.4</ecNumber>
        </recommendedName>
    </domain>
</protein>
<dbReference type="EC" id="2.1.1.107" evidence="1"/>
<dbReference type="EC" id="1.3.1.76" evidence="1"/>
<dbReference type="EC" id="4.99.1.4" evidence="1"/>
<dbReference type="EMBL" id="CP001091">
    <property type="protein sequence ID" value="ACE62586.1"/>
    <property type="molecule type" value="Genomic_DNA"/>
</dbReference>
<dbReference type="RefSeq" id="WP_005618311.1">
    <property type="nucleotide sequence ID" value="NC_010939.1"/>
</dbReference>
<dbReference type="SMR" id="B3GZA0"/>
<dbReference type="KEGG" id="apa:APP7_1934"/>
<dbReference type="HOGENOM" id="CLU_011276_2_1_6"/>
<dbReference type="UniPathway" id="UPA00148">
    <property type="reaction ID" value="UER00211"/>
</dbReference>
<dbReference type="UniPathway" id="UPA00148">
    <property type="reaction ID" value="UER00222"/>
</dbReference>
<dbReference type="UniPathway" id="UPA00262">
    <property type="reaction ID" value="UER00211"/>
</dbReference>
<dbReference type="UniPathway" id="UPA00262">
    <property type="reaction ID" value="UER00222"/>
</dbReference>
<dbReference type="UniPathway" id="UPA00262">
    <property type="reaction ID" value="UER00376"/>
</dbReference>
<dbReference type="Proteomes" id="UP000001226">
    <property type="component" value="Chromosome"/>
</dbReference>
<dbReference type="GO" id="GO:0051287">
    <property type="term" value="F:NAD binding"/>
    <property type="evidence" value="ECO:0007669"/>
    <property type="project" value="InterPro"/>
</dbReference>
<dbReference type="GO" id="GO:0043115">
    <property type="term" value="F:precorrin-2 dehydrogenase activity"/>
    <property type="evidence" value="ECO:0007669"/>
    <property type="project" value="UniProtKB-UniRule"/>
</dbReference>
<dbReference type="GO" id="GO:0051266">
    <property type="term" value="F:sirohydrochlorin ferrochelatase activity"/>
    <property type="evidence" value="ECO:0007669"/>
    <property type="project" value="UniProtKB-EC"/>
</dbReference>
<dbReference type="GO" id="GO:0004851">
    <property type="term" value="F:uroporphyrin-III C-methyltransferase activity"/>
    <property type="evidence" value="ECO:0007669"/>
    <property type="project" value="UniProtKB-UniRule"/>
</dbReference>
<dbReference type="GO" id="GO:0009236">
    <property type="term" value="P:cobalamin biosynthetic process"/>
    <property type="evidence" value="ECO:0007669"/>
    <property type="project" value="UniProtKB-UniRule"/>
</dbReference>
<dbReference type="GO" id="GO:0032259">
    <property type="term" value="P:methylation"/>
    <property type="evidence" value="ECO:0007669"/>
    <property type="project" value="UniProtKB-KW"/>
</dbReference>
<dbReference type="GO" id="GO:0019354">
    <property type="term" value="P:siroheme biosynthetic process"/>
    <property type="evidence" value="ECO:0007669"/>
    <property type="project" value="UniProtKB-UniRule"/>
</dbReference>
<dbReference type="CDD" id="cd11642">
    <property type="entry name" value="SUMT"/>
    <property type="match status" value="1"/>
</dbReference>
<dbReference type="FunFam" id="3.30.160.110:FF:000001">
    <property type="entry name" value="Siroheme synthase"/>
    <property type="match status" value="1"/>
</dbReference>
<dbReference type="FunFam" id="3.30.950.10:FF:000001">
    <property type="entry name" value="Siroheme synthase"/>
    <property type="match status" value="1"/>
</dbReference>
<dbReference type="FunFam" id="3.40.1010.10:FF:000001">
    <property type="entry name" value="Siroheme synthase"/>
    <property type="match status" value="1"/>
</dbReference>
<dbReference type="Gene3D" id="3.40.1010.10">
    <property type="entry name" value="Cobalt-precorrin-4 Transmethylase, Domain 1"/>
    <property type="match status" value="1"/>
</dbReference>
<dbReference type="Gene3D" id="3.30.950.10">
    <property type="entry name" value="Methyltransferase, Cobalt-precorrin-4 Transmethylase, Domain 2"/>
    <property type="match status" value="1"/>
</dbReference>
<dbReference type="Gene3D" id="3.40.50.720">
    <property type="entry name" value="NAD(P)-binding Rossmann-like Domain"/>
    <property type="match status" value="1"/>
</dbReference>
<dbReference type="Gene3D" id="1.10.8.210">
    <property type="entry name" value="Sirohaem synthase, dimerisation domain"/>
    <property type="match status" value="1"/>
</dbReference>
<dbReference type="Gene3D" id="3.30.160.110">
    <property type="entry name" value="Siroheme synthase, domain 2"/>
    <property type="match status" value="1"/>
</dbReference>
<dbReference type="HAMAP" id="MF_01646">
    <property type="entry name" value="Siroheme_synth"/>
    <property type="match status" value="1"/>
</dbReference>
<dbReference type="InterPro" id="IPR000878">
    <property type="entry name" value="4pyrrol_Mease"/>
</dbReference>
<dbReference type="InterPro" id="IPR035996">
    <property type="entry name" value="4pyrrol_Methylase_sf"/>
</dbReference>
<dbReference type="InterPro" id="IPR014777">
    <property type="entry name" value="4pyrrole_Mease_sub1"/>
</dbReference>
<dbReference type="InterPro" id="IPR014776">
    <property type="entry name" value="4pyrrole_Mease_sub2"/>
</dbReference>
<dbReference type="InterPro" id="IPR006366">
    <property type="entry name" value="CobA/CysG_C"/>
</dbReference>
<dbReference type="InterPro" id="IPR036291">
    <property type="entry name" value="NAD(P)-bd_dom_sf"/>
</dbReference>
<dbReference type="InterPro" id="IPR050161">
    <property type="entry name" value="Siro_Cobalamin_biosynth"/>
</dbReference>
<dbReference type="InterPro" id="IPR037115">
    <property type="entry name" value="Sirohaem_synt_dimer_dom_sf"/>
</dbReference>
<dbReference type="InterPro" id="IPR012409">
    <property type="entry name" value="Sirohaem_synth"/>
</dbReference>
<dbReference type="InterPro" id="IPR028281">
    <property type="entry name" value="Sirohaem_synthase_central"/>
</dbReference>
<dbReference type="InterPro" id="IPR019478">
    <property type="entry name" value="Sirohaem_synthase_dimer_dom"/>
</dbReference>
<dbReference type="InterPro" id="IPR006367">
    <property type="entry name" value="Sirohaem_synthase_N"/>
</dbReference>
<dbReference type="InterPro" id="IPR003043">
    <property type="entry name" value="Uropor_MeTrfase_CS"/>
</dbReference>
<dbReference type="NCBIfam" id="TIGR01469">
    <property type="entry name" value="cobA_cysG_Cterm"/>
    <property type="match status" value="1"/>
</dbReference>
<dbReference type="NCBIfam" id="TIGR01470">
    <property type="entry name" value="cysG_Nterm"/>
    <property type="match status" value="1"/>
</dbReference>
<dbReference type="NCBIfam" id="NF004790">
    <property type="entry name" value="PRK06136.1"/>
    <property type="match status" value="1"/>
</dbReference>
<dbReference type="NCBIfam" id="NF007922">
    <property type="entry name" value="PRK10637.1"/>
    <property type="match status" value="1"/>
</dbReference>
<dbReference type="PANTHER" id="PTHR45790:SF1">
    <property type="entry name" value="SIROHEME SYNTHASE"/>
    <property type="match status" value="1"/>
</dbReference>
<dbReference type="PANTHER" id="PTHR45790">
    <property type="entry name" value="SIROHEME SYNTHASE-RELATED"/>
    <property type="match status" value="1"/>
</dbReference>
<dbReference type="Pfam" id="PF10414">
    <property type="entry name" value="CysG_dimeriser"/>
    <property type="match status" value="1"/>
</dbReference>
<dbReference type="Pfam" id="PF13241">
    <property type="entry name" value="NAD_binding_7"/>
    <property type="match status" value="1"/>
</dbReference>
<dbReference type="Pfam" id="PF14824">
    <property type="entry name" value="Sirohm_synth_M"/>
    <property type="match status" value="1"/>
</dbReference>
<dbReference type="Pfam" id="PF00590">
    <property type="entry name" value="TP_methylase"/>
    <property type="match status" value="1"/>
</dbReference>
<dbReference type="PIRSF" id="PIRSF036426">
    <property type="entry name" value="Sirohaem_synth"/>
    <property type="match status" value="1"/>
</dbReference>
<dbReference type="SUPFAM" id="SSF51735">
    <property type="entry name" value="NAD(P)-binding Rossmann-fold domains"/>
    <property type="match status" value="1"/>
</dbReference>
<dbReference type="SUPFAM" id="SSF75615">
    <property type="entry name" value="Siroheme synthase middle domains-like"/>
    <property type="match status" value="1"/>
</dbReference>
<dbReference type="SUPFAM" id="SSF53790">
    <property type="entry name" value="Tetrapyrrole methylase"/>
    <property type="match status" value="1"/>
</dbReference>
<dbReference type="PROSITE" id="PS00839">
    <property type="entry name" value="SUMT_1"/>
    <property type="match status" value="1"/>
</dbReference>
<dbReference type="PROSITE" id="PS00840">
    <property type="entry name" value="SUMT_2"/>
    <property type="match status" value="1"/>
</dbReference>
<evidence type="ECO:0000255" key="1">
    <source>
        <dbReference type="HAMAP-Rule" id="MF_01646"/>
    </source>
</evidence>
<organism>
    <name type="scientific">Actinobacillus pleuropneumoniae serotype 7 (strain AP76)</name>
    <dbReference type="NCBI Taxonomy" id="537457"/>
    <lineage>
        <taxon>Bacteria</taxon>
        <taxon>Pseudomonadati</taxon>
        <taxon>Pseudomonadota</taxon>
        <taxon>Gammaproteobacteria</taxon>
        <taxon>Pasteurellales</taxon>
        <taxon>Pasteurellaceae</taxon>
        <taxon>Actinobacillus</taxon>
    </lineage>
</organism>
<comment type="function">
    <text evidence="1">Multifunctional enzyme that catalyzes the SAM-dependent methylations of uroporphyrinogen III at position C-2 and C-7 to form precorrin-2 via precorrin-1. Then it catalyzes the NAD-dependent ring dehydrogenation of precorrin-2 to yield sirohydrochlorin. Finally, it catalyzes the ferrochelation of sirohydrochlorin to yield siroheme.</text>
</comment>
<comment type="catalytic activity">
    <reaction evidence="1">
        <text>uroporphyrinogen III + 2 S-adenosyl-L-methionine = precorrin-2 + 2 S-adenosyl-L-homocysteine + H(+)</text>
        <dbReference type="Rhea" id="RHEA:32459"/>
        <dbReference type="ChEBI" id="CHEBI:15378"/>
        <dbReference type="ChEBI" id="CHEBI:57308"/>
        <dbReference type="ChEBI" id="CHEBI:57856"/>
        <dbReference type="ChEBI" id="CHEBI:58827"/>
        <dbReference type="ChEBI" id="CHEBI:59789"/>
        <dbReference type="EC" id="2.1.1.107"/>
    </reaction>
</comment>
<comment type="catalytic activity">
    <reaction evidence="1">
        <text>precorrin-2 + NAD(+) = sirohydrochlorin + NADH + 2 H(+)</text>
        <dbReference type="Rhea" id="RHEA:15613"/>
        <dbReference type="ChEBI" id="CHEBI:15378"/>
        <dbReference type="ChEBI" id="CHEBI:57540"/>
        <dbReference type="ChEBI" id="CHEBI:57945"/>
        <dbReference type="ChEBI" id="CHEBI:58351"/>
        <dbReference type="ChEBI" id="CHEBI:58827"/>
        <dbReference type="EC" id="1.3.1.76"/>
    </reaction>
</comment>
<comment type="catalytic activity">
    <reaction evidence="1">
        <text>siroheme + 2 H(+) = sirohydrochlorin + Fe(2+)</text>
        <dbReference type="Rhea" id="RHEA:24360"/>
        <dbReference type="ChEBI" id="CHEBI:15378"/>
        <dbReference type="ChEBI" id="CHEBI:29033"/>
        <dbReference type="ChEBI" id="CHEBI:58351"/>
        <dbReference type="ChEBI" id="CHEBI:60052"/>
        <dbReference type="EC" id="4.99.1.4"/>
    </reaction>
</comment>
<comment type="pathway">
    <text evidence="1">Cofactor biosynthesis; adenosylcobalamin biosynthesis; precorrin-2 from uroporphyrinogen III: step 1/1.</text>
</comment>
<comment type="pathway">
    <text evidence="1">Cofactor biosynthesis; adenosylcobalamin biosynthesis; sirohydrochlorin from precorrin-2: step 1/1.</text>
</comment>
<comment type="pathway">
    <text evidence="1">Porphyrin-containing compound metabolism; siroheme biosynthesis; precorrin-2 from uroporphyrinogen III: step 1/1.</text>
</comment>
<comment type="pathway">
    <text evidence="1">Porphyrin-containing compound metabolism; siroheme biosynthesis; siroheme from sirohydrochlorin: step 1/1.</text>
</comment>
<comment type="pathway">
    <text evidence="1">Porphyrin-containing compound metabolism; siroheme biosynthesis; sirohydrochlorin from precorrin-2: step 1/1.</text>
</comment>
<comment type="similarity">
    <text evidence="1">In the N-terminal section; belongs to the precorrin-2 dehydrogenase / sirohydrochlorin ferrochelatase family.</text>
</comment>
<comment type="similarity">
    <text evidence="1">In the C-terminal section; belongs to the precorrin methyltransferase family.</text>
</comment>
<name>CYSG_ACTP7</name>
<accession>B3GZA0</accession>
<feature type="chain" id="PRO_1000186933" description="Siroheme synthase">
    <location>
        <begin position="1"/>
        <end position="486"/>
    </location>
</feature>
<feature type="region of interest" description="Precorrin-2 dehydrogenase /sirohydrochlorin ferrochelatase" evidence="1">
    <location>
        <begin position="1"/>
        <end position="204"/>
    </location>
</feature>
<feature type="region of interest" description="Uroporphyrinogen-III C-methyltransferase" evidence="1">
    <location>
        <begin position="216"/>
        <end position="486"/>
    </location>
</feature>
<feature type="active site" description="Proton acceptor" evidence="1">
    <location>
        <position position="248"/>
    </location>
</feature>
<feature type="active site" description="Proton donor" evidence="1">
    <location>
        <position position="270"/>
    </location>
</feature>
<feature type="binding site" evidence="1">
    <location>
        <begin position="22"/>
        <end position="23"/>
    </location>
    <ligand>
        <name>NAD(+)</name>
        <dbReference type="ChEBI" id="CHEBI:57540"/>
    </ligand>
</feature>
<feature type="binding site" evidence="1">
    <location>
        <begin position="43"/>
        <end position="44"/>
    </location>
    <ligand>
        <name>NAD(+)</name>
        <dbReference type="ChEBI" id="CHEBI:57540"/>
    </ligand>
</feature>
<feature type="binding site" evidence="1">
    <location>
        <position position="225"/>
    </location>
    <ligand>
        <name>S-adenosyl-L-methionine</name>
        <dbReference type="ChEBI" id="CHEBI:59789"/>
    </ligand>
</feature>
<feature type="binding site" evidence="1">
    <location>
        <begin position="301"/>
        <end position="303"/>
    </location>
    <ligand>
        <name>S-adenosyl-L-methionine</name>
        <dbReference type="ChEBI" id="CHEBI:59789"/>
    </ligand>
</feature>
<feature type="binding site" evidence="1">
    <location>
        <position position="306"/>
    </location>
    <ligand>
        <name>S-adenosyl-L-methionine</name>
        <dbReference type="ChEBI" id="CHEBI:59789"/>
    </ligand>
</feature>
<feature type="binding site" evidence="1">
    <location>
        <begin position="331"/>
        <end position="332"/>
    </location>
    <ligand>
        <name>S-adenosyl-L-methionine</name>
        <dbReference type="ChEBI" id="CHEBI:59789"/>
    </ligand>
</feature>
<feature type="binding site" evidence="1">
    <location>
        <position position="383"/>
    </location>
    <ligand>
        <name>S-adenosyl-L-methionine</name>
        <dbReference type="ChEBI" id="CHEBI:59789"/>
    </ligand>
</feature>
<feature type="binding site" evidence="1">
    <location>
        <position position="412"/>
    </location>
    <ligand>
        <name>S-adenosyl-L-methionine</name>
        <dbReference type="ChEBI" id="CHEBI:59789"/>
    </ligand>
</feature>
<feature type="modified residue" description="Phosphoserine" evidence="1">
    <location>
        <position position="128"/>
    </location>
</feature>
<reference key="1">
    <citation type="submission" date="2008-06" db="EMBL/GenBank/DDBJ databases">
        <title>Genome and proteome analysis of A. pleuropneumoniae serotype 7.</title>
        <authorList>
            <person name="Linke B."/>
            <person name="Buettner F."/>
            <person name="Martinez-Arias R."/>
            <person name="Goesmann A."/>
            <person name="Baltes N."/>
            <person name="Tegetmeyer H."/>
            <person name="Singh M."/>
            <person name="Gerlach G.F."/>
        </authorList>
    </citation>
    <scope>NUCLEOTIDE SEQUENCE [LARGE SCALE GENOMIC DNA]</scope>
    <source>
        <strain>AP76</strain>
    </source>
</reference>